<evidence type="ECO:0000255" key="1">
    <source>
        <dbReference type="HAMAP-Rule" id="MF_00465"/>
    </source>
</evidence>
<accession>A8MLM7</accession>
<organism>
    <name type="scientific">Alkaliphilus oremlandii (strain OhILAs)</name>
    <name type="common">Clostridium oremlandii (strain OhILAs)</name>
    <dbReference type="NCBI Taxonomy" id="350688"/>
    <lineage>
        <taxon>Bacteria</taxon>
        <taxon>Bacillati</taxon>
        <taxon>Bacillota</taxon>
        <taxon>Clostridia</taxon>
        <taxon>Peptostreptococcales</taxon>
        <taxon>Natronincolaceae</taxon>
        <taxon>Alkaliphilus</taxon>
    </lineage>
</organism>
<reference key="1">
    <citation type="submission" date="2007-10" db="EMBL/GenBank/DDBJ databases">
        <title>Complete genome of Alkaliphilus oremlandii OhILAs.</title>
        <authorList>
            <person name="Copeland A."/>
            <person name="Lucas S."/>
            <person name="Lapidus A."/>
            <person name="Barry K."/>
            <person name="Detter J.C."/>
            <person name="Glavina del Rio T."/>
            <person name="Hammon N."/>
            <person name="Israni S."/>
            <person name="Dalin E."/>
            <person name="Tice H."/>
            <person name="Pitluck S."/>
            <person name="Chain P."/>
            <person name="Malfatti S."/>
            <person name="Shin M."/>
            <person name="Vergez L."/>
            <person name="Schmutz J."/>
            <person name="Larimer F."/>
            <person name="Land M."/>
            <person name="Hauser L."/>
            <person name="Kyrpides N."/>
            <person name="Mikhailova N."/>
            <person name="Stolz J.F."/>
            <person name="Dawson A."/>
            <person name="Fisher E."/>
            <person name="Crable B."/>
            <person name="Perera E."/>
            <person name="Lisak J."/>
            <person name="Ranganathan M."/>
            <person name="Basu P."/>
            <person name="Richardson P."/>
        </authorList>
    </citation>
    <scope>NUCLEOTIDE SEQUENCE [LARGE SCALE GENOMIC DNA]</scope>
    <source>
        <strain>OhILAs</strain>
    </source>
</reference>
<comment type="function">
    <text evidence="1">Catalyzes the decarboxylation of S-adenosylmethionine to S-adenosylmethioninamine (dcAdoMet), the propylamine donor required for the synthesis of the polyamines spermine and spermidine from the diamine putrescine.</text>
</comment>
<comment type="catalytic activity">
    <reaction evidence="1">
        <text>S-adenosyl-L-methionine + H(+) = S-adenosyl 3-(methylsulfanyl)propylamine + CO2</text>
        <dbReference type="Rhea" id="RHEA:15981"/>
        <dbReference type="ChEBI" id="CHEBI:15378"/>
        <dbReference type="ChEBI" id="CHEBI:16526"/>
        <dbReference type="ChEBI" id="CHEBI:57443"/>
        <dbReference type="ChEBI" id="CHEBI:59789"/>
        <dbReference type="EC" id="4.1.1.50"/>
    </reaction>
</comment>
<comment type="cofactor">
    <cofactor evidence="1">
        <name>pyruvate</name>
        <dbReference type="ChEBI" id="CHEBI:15361"/>
    </cofactor>
    <text evidence="1">Binds 1 pyruvoyl group covalently per subunit.</text>
</comment>
<comment type="pathway">
    <text evidence="1">Amine and polyamine biosynthesis; S-adenosylmethioninamine biosynthesis; S-adenosylmethioninamine from S-adenosyl-L-methionine: step 1/1.</text>
</comment>
<comment type="subunit">
    <text evidence="1">Heterooctamer of four alpha and four beta chains arranged as a tetramer of alpha/beta heterodimers.</text>
</comment>
<comment type="PTM">
    <text evidence="1">Is synthesized initially as an inactive proenzyme. Formation of the active enzyme involves a self-maturation process in which the active site pyruvoyl group is generated from an internal serine residue via an autocatalytic post-translational modification. Two non-identical subunits are generated from the proenzyme in this reaction, and the pyruvate is formed at the N-terminus of the alpha chain, which is derived from the carboxyl end of the proenzyme. The post-translation cleavage follows an unusual pathway, termed non-hydrolytic serinolysis, in which the side chain hydroxyl group of the serine supplies its oxygen atom to form the C-terminus of the beta chain, while the remainder of the serine residue undergoes an oxidative deamination to produce ammonia and the pyruvoyl group blocking the N-terminus of the alpha chain.</text>
</comment>
<comment type="similarity">
    <text evidence="1">Belongs to the prokaryotic AdoMetDC family. Type 2 subfamily.</text>
</comment>
<dbReference type="EC" id="4.1.1.50" evidence="1"/>
<dbReference type="EMBL" id="CP000853">
    <property type="protein sequence ID" value="ABW17944.1"/>
    <property type="molecule type" value="Genomic_DNA"/>
</dbReference>
<dbReference type="RefSeq" id="WP_012158259.1">
    <property type="nucleotide sequence ID" value="NC_009922.1"/>
</dbReference>
<dbReference type="STRING" id="350688.Clos_0382"/>
<dbReference type="KEGG" id="aoe:Clos_0382"/>
<dbReference type="eggNOG" id="COG1586">
    <property type="taxonomic scope" value="Bacteria"/>
</dbReference>
<dbReference type="HOGENOM" id="CLU_092007_0_0_9"/>
<dbReference type="OrthoDB" id="5290709at2"/>
<dbReference type="UniPathway" id="UPA00331">
    <property type="reaction ID" value="UER00451"/>
</dbReference>
<dbReference type="Proteomes" id="UP000000269">
    <property type="component" value="Chromosome"/>
</dbReference>
<dbReference type="GO" id="GO:0005829">
    <property type="term" value="C:cytosol"/>
    <property type="evidence" value="ECO:0007669"/>
    <property type="project" value="TreeGrafter"/>
</dbReference>
<dbReference type="GO" id="GO:0004014">
    <property type="term" value="F:adenosylmethionine decarboxylase activity"/>
    <property type="evidence" value="ECO:0007669"/>
    <property type="project" value="UniProtKB-UniRule"/>
</dbReference>
<dbReference type="GO" id="GO:0008295">
    <property type="term" value="P:spermidine biosynthetic process"/>
    <property type="evidence" value="ECO:0007669"/>
    <property type="project" value="UniProtKB-UniRule"/>
</dbReference>
<dbReference type="Gene3D" id="3.60.90.10">
    <property type="entry name" value="S-adenosylmethionine decarboxylase"/>
    <property type="match status" value="1"/>
</dbReference>
<dbReference type="HAMAP" id="MF_00465">
    <property type="entry name" value="AdoMetDC_2"/>
    <property type="match status" value="1"/>
</dbReference>
<dbReference type="InterPro" id="IPR003826">
    <property type="entry name" value="AdoMetDC_fam_prok"/>
</dbReference>
<dbReference type="InterPro" id="IPR009165">
    <property type="entry name" value="S-AdoMet_deCO2ase_bac"/>
</dbReference>
<dbReference type="InterPro" id="IPR016067">
    <property type="entry name" value="S-AdoMet_deCO2ase_core"/>
</dbReference>
<dbReference type="NCBIfam" id="TIGR03331">
    <property type="entry name" value="SAM_DCase_Eco"/>
    <property type="match status" value="1"/>
</dbReference>
<dbReference type="PANTHER" id="PTHR33866">
    <property type="entry name" value="S-ADENOSYLMETHIONINE DECARBOXYLASE PROENZYME"/>
    <property type="match status" value="1"/>
</dbReference>
<dbReference type="PANTHER" id="PTHR33866:SF1">
    <property type="entry name" value="S-ADENOSYLMETHIONINE DECARBOXYLASE PROENZYME"/>
    <property type="match status" value="1"/>
</dbReference>
<dbReference type="Pfam" id="PF02675">
    <property type="entry name" value="AdoMet_dc"/>
    <property type="match status" value="1"/>
</dbReference>
<dbReference type="PIRSF" id="PIRSF001356">
    <property type="entry name" value="SAM_decarboxylas"/>
    <property type="match status" value="1"/>
</dbReference>
<dbReference type="SUPFAM" id="SSF56276">
    <property type="entry name" value="S-adenosylmethionine decarboxylase"/>
    <property type="match status" value="1"/>
</dbReference>
<proteinExistence type="inferred from homology"/>
<feature type="chain" id="PRO_0000364357" description="S-adenosylmethionine decarboxylase beta chain" evidence="1">
    <location>
        <begin position="1"/>
        <end position="119"/>
    </location>
</feature>
<feature type="chain" id="PRO_0000364358" description="S-adenosylmethionine decarboxylase alpha chain" evidence="1">
    <location>
        <begin position="120"/>
        <end position="270"/>
    </location>
</feature>
<feature type="active site" description="Schiff-base intermediate with substrate; via pyruvic acid" evidence="1">
    <location>
        <position position="120"/>
    </location>
</feature>
<feature type="active site" description="Proton acceptor; for processing activity" evidence="1">
    <location>
        <position position="125"/>
    </location>
</feature>
<feature type="active site" description="Proton donor; for catalytic activity" evidence="1">
    <location>
        <position position="148"/>
    </location>
</feature>
<feature type="site" description="Cleavage (non-hydrolytic); by autolysis" evidence="1">
    <location>
        <begin position="119"/>
        <end position="120"/>
    </location>
</feature>
<feature type="modified residue" description="Pyruvic acid (Ser); by autocatalysis" evidence="1">
    <location>
        <position position="120"/>
    </location>
</feature>
<sequence>MLGLEKKLTLYGFNNLTKTLSFNIYDVCYAKSEKAQKAYIEYIDEQYNSERLTKILCDVTEMIGAHVLNISKQDYEPQGASVNILITEEALPLHLIDESCNKGEGIAAQRDTIHAHLDKSHVTVHTYPEYHPDNAISTFRVDIDVSTCGMISPLNALDYLIGSFDSDIITIDYRVRGFTRDVEGKKFYIDHNITSIQDYIDDETLKKYDAIDVNVYQSNIFHTKMLIKEIELQNYLFNKDVNELLPKQRLEITNNLRKEMIEIFSGMNIY</sequence>
<keyword id="KW-0068">Autocatalytic cleavage</keyword>
<keyword id="KW-0210">Decarboxylase</keyword>
<keyword id="KW-0456">Lyase</keyword>
<keyword id="KW-0620">Polyamine biosynthesis</keyword>
<keyword id="KW-0670">Pyruvate</keyword>
<keyword id="KW-1185">Reference proteome</keyword>
<keyword id="KW-0949">S-adenosyl-L-methionine</keyword>
<keyword id="KW-0704">Schiff base</keyword>
<keyword id="KW-0745">Spermidine biosynthesis</keyword>
<keyword id="KW-0865">Zymogen</keyword>
<protein>
    <recommendedName>
        <fullName evidence="1">S-adenosylmethionine decarboxylase proenzyme</fullName>
        <shortName evidence="1">AdoMetDC</shortName>
        <shortName evidence="1">SAMDC</shortName>
        <ecNumber evidence="1">4.1.1.50</ecNumber>
    </recommendedName>
    <component>
        <recommendedName>
            <fullName evidence="1">S-adenosylmethionine decarboxylase beta chain</fullName>
        </recommendedName>
    </component>
    <component>
        <recommendedName>
            <fullName evidence="1">S-adenosylmethionine decarboxylase alpha chain</fullName>
        </recommendedName>
    </component>
</protein>
<name>SPED_ALKOO</name>
<gene>
    <name evidence="1" type="primary">speD</name>
    <name type="ordered locus">Clos_0382</name>
</gene>